<protein>
    <recommendedName>
        <fullName evidence="2">C-1-tetrahydrofolate synthase, cytoplasmic</fullName>
        <shortName>C1-THF synthase</shortName>
    </recommendedName>
    <domain>
        <recommendedName>
            <fullName evidence="2">Methylenetetrahydrofolate dehydrogenase</fullName>
            <ecNumber evidence="2">1.5.1.5</ecNumber>
        </recommendedName>
    </domain>
    <domain>
        <recommendedName>
            <fullName evidence="2">Methenyltetrahydrofolate cyclohydrolase</fullName>
            <ecNumber evidence="2">3.5.4.9</ecNumber>
        </recommendedName>
    </domain>
    <domain>
        <recommendedName>
            <fullName evidence="2">Formyltetrahydrofolate synthetase</fullName>
            <ecNumber evidence="2">6.3.4.3</ecNumber>
        </recommendedName>
    </domain>
</protein>
<name>C1TC_RAT</name>
<proteinExistence type="evidence at protein level"/>
<comment type="function">
    <text evidence="2">Trifunctional enzyme that catalyzes the interconversion of three forms of one-carbon-substituted tetrahydrofolate: (6R)-5,10-methylene-5,6,7,8-tetrahydrofolate, 5,10-methenyltetrahydrofolate and (6S)-10-formyltetrahydrofolate. These derivatives of tetrahydrofolate are differentially required in nucleotide and amino acid biosynthesis, (6S)-10-formyltetrahydrofolate being required for purine biosynthesis while (6R)-5,10-methylene-5,6,7,8-tetrahydrofolate is used for serine and methionine biosynthesis for instance.</text>
</comment>
<comment type="catalytic activity">
    <reaction evidence="2">
        <text>(6R)-5,10-methylene-5,6,7,8-tetrahydrofolate + NADP(+) = (6R)-5,10-methenyltetrahydrofolate + NADPH</text>
        <dbReference type="Rhea" id="RHEA:22812"/>
        <dbReference type="ChEBI" id="CHEBI:15636"/>
        <dbReference type="ChEBI" id="CHEBI:57455"/>
        <dbReference type="ChEBI" id="CHEBI:57783"/>
        <dbReference type="ChEBI" id="CHEBI:58349"/>
        <dbReference type="EC" id="1.5.1.5"/>
    </reaction>
</comment>
<comment type="catalytic activity">
    <reaction evidence="2">
        <text>(6R)-5,10-methenyltetrahydrofolate + H2O = (6R)-10-formyltetrahydrofolate + H(+)</text>
        <dbReference type="Rhea" id="RHEA:23700"/>
        <dbReference type="ChEBI" id="CHEBI:15377"/>
        <dbReference type="ChEBI" id="CHEBI:15378"/>
        <dbReference type="ChEBI" id="CHEBI:57455"/>
        <dbReference type="ChEBI" id="CHEBI:195366"/>
        <dbReference type="EC" id="3.5.4.9"/>
    </reaction>
</comment>
<comment type="catalytic activity">
    <reaction evidence="2">
        <text>(6S)-5,6,7,8-tetrahydrofolate + formate + ATP = (6R)-10-formyltetrahydrofolate + ADP + phosphate</text>
        <dbReference type="Rhea" id="RHEA:20221"/>
        <dbReference type="ChEBI" id="CHEBI:15740"/>
        <dbReference type="ChEBI" id="CHEBI:30616"/>
        <dbReference type="ChEBI" id="CHEBI:43474"/>
        <dbReference type="ChEBI" id="CHEBI:57453"/>
        <dbReference type="ChEBI" id="CHEBI:195366"/>
        <dbReference type="ChEBI" id="CHEBI:456216"/>
        <dbReference type="EC" id="6.3.4.3"/>
    </reaction>
</comment>
<comment type="pathway">
    <text evidence="2">One-carbon metabolism; tetrahydrofolate interconversion.</text>
</comment>
<comment type="subunit">
    <text evidence="2">Homodimer.</text>
</comment>
<comment type="subcellular location">
    <subcellularLocation>
        <location evidence="2">Cytoplasm</location>
    </subcellularLocation>
</comment>
<comment type="domain">
    <text evidence="2">The N-terminal methylenetetrahydrofolate dehydrogenase and methenyltetrahydrofolate cyclohydrolase (D/C) domain carries both the methylenetetrahydrofolate dehydrogenase and methenyltetrahydrofolate cyclohydrolase activities.</text>
</comment>
<comment type="domain">
    <text evidence="2">The larger C-terminal formyltetrahydrofolate synthetase domain carries a third formyltetrahydrofolate synthetase activity.</text>
</comment>
<comment type="similarity">
    <text evidence="3">In the N-terminal section; belongs to the tetrahydrofolate dehydrogenase/cyclohydrolase family.</text>
</comment>
<comment type="similarity">
    <text evidence="3">In the C-terminal section; belongs to the formate--tetrahydrofolate ligase family.</text>
</comment>
<gene>
    <name type="primary">Mthfd1</name>
    <name type="synonym">Mthfd</name>
</gene>
<evidence type="ECO:0000250" key="1"/>
<evidence type="ECO:0000250" key="2">
    <source>
        <dbReference type="UniProtKB" id="P11586"/>
    </source>
</evidence>
<evidence type="ECO:0000305" key="3"/>
<reference key="1">
    <citation type="journal article" date="1990" name="J. Biol. Chem.">
        <title>Rat C1-tetrahydrofolate synthase. cDNA isolation, tissue-specific levels of the mRNA, and expression of the protein in yeast.</title>
        <authorList>
            <person name="Thigpen A.E."/>
            <person name="West M.G."/>
            <person name="Appling D.R."/>
        </authorList>
    </citation>
    <scope>NUCLEOTIDE SEQUENCE [MRNA]</scope>
    <source>
        <tissue>Liver</tissue>
    </source>
</reference>
<reference key="2">
    <citation type="submission" date="1995-07" db="EMBL/GenBank/DDBJ databases">
        <authorList>
            <person name="Appling D.R."/>
        </authorList>
    </citation>
    <scope>SEQUENCE REVISION TO 19 AND 24</scope>
</reference>
<reference key="3">
    <citation type="submission" date="2006-11" db="UniProtKB">
        <authorList>
            <person name="Lubec G."/>
            <person name="Afjehi-Sadat L."/>
        </authorList>
    </citation>
    <scope>PROTEIN SEQUENCE OF 521-532</scope>
    <scope>IDENTIFICATION BY MASS SPECTROMETRY</scope>
    <source>
        <strain>Sprague-Dawley</strain>
        <tissue>Spinal cord</tissue>
    </source>
</reference>
<accession>P27653</accession>
<accession>Q62808</accession>
<keyword id="KW-0007">Acetylation</keyword>
<keyword id="KW-0028">Amino-acid biosynthesis</keyword>
<keyword id="KW-0067">ATP-binding</keyword>
<keyword id="KW-0963">Cytoplasm</keyword>
<keyword id="KW-0903">Direct protein sequencing</keyword>
<keyword id="KW-0368">Histidine biosynthesis</keyword>
<keyword id="KW-0378">Hydrolase</keyword>
<keyword id="KW-0436">Ligase</keyword>
<keyword id="KW-0486">Methionine biosynthesis</keyword>
<keyword id="KW-0511">Multifunctional enzyme</keyword>
<keyword id="KW-0521">NADP</keyword>
<keyword id="KW-0547">Nucleotide-binding</keyword>
<keyword id="KW-0554">One-carbon metabolism</keyword>
<keyword id="KW-0560">Oxidoreductase</keyword>
<keyword id="KW-0597">Phosphoprotein</keyword>
<keyword id="KW-0658">Purine biosynthesis</keyword>
<keyword id="KW-1185">Reference proteome</keyword>
<sequence length="935" mass="100996">MAPAGILNGKVVSAQIRNRLKTQVTQMQEQVPGFTPGLAILQVGDRDDSNLYINVKLKAAQEIGIKATHIKLPRTSTESEVLKYVISLNEDATVHGFIVQLPLDSENSINTEAVINAIAPEKDVDGLTSINAGKLARGDLKDCFIPCTPKGCLELIKETGVQIAGRHAVVVGRSKIVGAPMHDLLLWNNATVTTCHSKTADLDKEVNKGDILVVATGQPEMVKGEWIKPGAVVIDCGINYVPDDTKPNGRKVVGDVAYDEAKEKASFITPVPGGVGPMTVAMLMQSTVESAQRFLKKFKPGKWTIQYNKLNLKTPVPSDIAISRSCKPKLIGNLAREIGLLTEEVELYGETKAKVLLSALDRLKHQPDGKYVVVTGITPTPLGEGKSTTTIGLVQALGAHLHQNVFACVRQPSQGPTFGIKGGAAGGGYSQVIPMEEFNLHLTGDIHAITAANNLVAAAIDARIFHELTQTDKALFNRLVPSVNGVRKFSDIQIRRLRRLGIEKTDPAALTDDEINRFARLDIDPETITWQRVLDTNDRFLRKITIGQAPTEKGHTRTAQFDISVASEIMAVLALTSSLEDMRARLGKMVVASSKKGEPISCEDLGVSGALTVLMKDAIKPNLMQTLEGTPVFVHAGPFANIAHGNSSIIADRIALKLVGPEGFVVTEAGFGADIGMEKFFNIKCRYSGLQPHVVVLVATVRALKMHGGGPTVTAGLPLPKAYTEEDLDLVEKGFSNLRKQIENARMFGVPVVVAMNAFKTDTDTELDLIGRLSREHGAFDAVKCTHWAEGGQGALALAQAVQRASQAPSSFQLLYDLKLSVEDKIRIIAQKIYGADDIELLPEAQNKAEIYTKQGFGNLPICMAKTHLSLSHNPEQKGVPTGFVLPIRDIRASVGAGFLYPLVGTMSTMPGLPTRPCFYDIDLDPETEQVNGLF</sequence>
<organism>
    <name type="scientific">Rattus norvegicus</name>
    <name type="common">Rat</name>
    <dbReference type="NCBI Taxonomy" id="10116"/>
    <lineage>
        <taxon>Eukaryota</taxon>
        <taxon>Metazoa</taxon>
        <taxon>Chordata</taxon>
        <taxon>Craniata</taxon>
        <taxon>Vertebrata</taxon>
        <taxon>Euteleostomi</taxon>
        <taxon>Mammalia</taxon>
        <taxon>Eutheria</taxon>
        <taxon>Euarchontoglires</taxon>
        <taxon>Glires</taxon>
        <taxon>Rodentia</taxon>
        <taxon>Myomorpha</taxon>
        <taxon>Muroidea</taxon>
        <taxon>Muridae</taxon>
        <taxon>Murinae</taxon>
        <taxon>Rattus</taxon>
    </lineage>
</organism>
<feature type="chain" id="PRO_0000199323" description="C-1-tetrahydrofolate synthase, cytoplasmic">
    <location>
        <begin position="1"/>
        <end position="935"/>
    </location>
</feature>
<feature type="region of interest" description="Methylenetetrahydrofolate dehydrogenase and methenyltetrahydrofolate cyclohydrolase (D/C) domain" evidence="2">
    <location>
        <begin position="2"/>
        <end position="291"/>
    </location>
</feature>
<feature type="region of interest" description="Formyltetrahydrofolate synthetase domain" evidence="2">
    <location>
        <begin position="310"/>
        <end position="935"/>
    </location>
</feature>
<feature type="active site" evidence="2">
    <location>
        <position position="56"/>
    </location>
</feature>
<feature type="binding site" evidence="2">
    <location>
        <begin position="52"/>
        <end position="56"/>
    </location>
    <ligand>
        <name>substrate</name>
    </ligand>
</feature>
<feature type="binding site" evidence="2">
    <location>
        <begin position="99"/>
        <end position="101"/>
    </location>
    <ligand>
        <name>substrate</name>
    </ligand>
</feature>
<feature type="binding site" evidence="2">
    <location>
        <begin position="172"/>
        <end position="174"/>
    </location>
    <ligand>
        <name>NADP(+)</name>
        <dbReference type="ChEBI" id="CHEBI:58349"/>
    </ligand>
</feature>
<feature type="binding site" evidence="2">
    <location>
        <position position="197"/>
    </location>
    <ligand>
        <name>NADP(+)</name>
        <dbReference type="ChEBI" id="CHEBI:58349"/>
    </ligand>
</feature>
<feature type="binding site" evidence="2">
    <location>
        <begin position="272"/>
        <end position="276"/>
    </location>
    <ligand>
        <name>substrate</name>
    </ligand>
</feature>
<feature type="binding site" evidence="1">
    <location>
        <begin position="380"/>
        <end position="387"/>
    </location>
    <ligand>
        <name>ATP</name>
        <dbReference type="ChEBI" id="CHEBI:30616"/>
    </ligand>
</feature>
<feature type="modified residue" description="N-acetylmethionine" evidence="2">
    <location>
        <position position="1"/>
    </location>
</feature>
<feature type="modified residue" description="Phosphoserine" evidence="2">
    <location>
        <position position="318"/>
    </location>
</feature>
<feature type="modified residue" description="Phosphoserine" evidence="2">
    <location>
        <position position="413"/>
    </location>
</feature>
<feature type="modified residue" description="Phosphoserine" evidence="2">
    <location>
        <position position="490"/>
    </location>
</feature>
<dbReference type="EC" id="1.5.1.5" evidence="2"/>
<dbReference type="EC" id="3.5.4.9" evidence="2"/>
<dbReference type="EC" id="6.3.4.3" evidence="2"/>
<dbReference type="EMBL" id="J05519">
    <property type="protein sequence ID" value="AAA74248.1"/>
    <property type="molecule type" value="mRNA"/>
</dbReference>
<dbReference type="EMBL" id="U31032">
    <property type="protein sequence ID" value="AAA74744.1"/>
    <property type="molecule type" value="Genomic_DNA"/>
</dbReference>
<dbReference type="PIR" id="A35367">
    <property type="entry name" value="A35367"/>
</dbReference>
<dbReference type="RefSeq" id="NP_071953.1">
    <property type="nucleotide sequence ID" value="NM_022508.1"/>
</dbReference>
<dbReference type="SMR" id="P27653"/>
<dbReference type="BioGRID" id="249015">
    <property type="interactions" value="1"/>
</dbReference>
<dbReference type="FunCoup" id="P27653">
    <property type="interactions" value="2270"/>
</dbReference>
<dbReference type="IntAct" id="P27653">
    <property type="interactions" value="1"/>
</dbReference>
<dbReference type="STRING" id="10116.ENSRNOP00000008374"/>
<dbReference type="GlyGen" id="P27653">
    <property type="glycosylation" value="2 sites"/>
</dbReference>
<dbReference type="iPTMnet" id="P27653"/>
<dbReference type="PhosphoSitePlus" id="P27653"/>
<dbReference type="jPOST" id="P27653"/>
<dbReference type="PaxDb" id="10116-ENSRNOP00000008374"/>
<dbReference type="GeneID" id="64300"/>
<dbReference type="KEGG" id="rno:64300"/>
<dbReference type="UCSC" id="RGD:708531">
    <property type="organism name" value="rat"/>
</dbReference>
<dbReference type="AGR" id="RGD:708531"/>
<dbReference type="CTD" id="4522"/>
<dbReference type="RGD" id="708531">
    <property type="gene designation" value="Mthfd1"/>
</dbReference>
<dbReference type="eggNOG" id="KOG4230">
    <property type="taxonomic scope" value="Eukaryota"/>
</dbReference>
<dbReference type="InParanoid" id="P27653"/>
<dbReference type="OrthoDB" id="1845775at2759"/>
<dbReference type="PhylomeDB" id="P27653"/>
<dbReference type="Reactome" id="R-RNO-196757">
    <property type="pathway name" value="Metabolism of folate and pterines"/>
</dbReference>
<dbReference type="UniPathway" id="UPA00193"/>
<dbReference type="PRO" id="PR:P27653"/>
<dbReference type="Proteomes" id="UP000002494">
    <property type="component" value="Unplaced"/>
</dbReference>
<dbReference type="GO" id="GO:0005829">
    <property type="term" value="C:cytosol"/>
    <property type="evidence" value="ECO:0000318"/>
    <property type="project" value="GO_Central"/>
</dbReference>
<dbReference type="GO" id="GO:0005524">
    <property type="term" value="F:ATP binding"/>
    <property type="evidence" value="ECO:0007669"/>
    <property type="project" value="UniProtKB-KW"/>
</dbReference>
<dbReference type="GO" id="GO:0004329">
    <property type="term" value="F:formate-tetrahydrofolate ligase activity"/>
    <property type="evidence" value="ECO:0000250"/>
    <property type="project" value="UniProtKB"/>
</dbReference>
<dbReference type="GO" id="GO:0004477">
    <property type="term" value="F:methenyltetrahydrofolate cyclohydrolase activity"/>
    <property type="evidence" value="ECO:0000250"/>
    <property type="project" value="UniProtKB"/>
</dbReference>
<dbReference type="GO" id="GO:0004487">
    <property type="term" value="F:methylenetetrahydrofolate dehydrogenase (NAD+) activity"/>
    <property type="evidence" value="ECO:0000266"/>
    <property type="project" value="RGD"/>
</dbReference>
<dbReference type="GO" id="GO:0004488">
    <property type="term" value="F:methylenetetrahydrofolate dehydrogenase (NADP+) activity"/>
    <property type="evidence" value="ECO:0000250"/>
    <property type="project" value="UniProtKB"/>
</dbReference>
<dbReference type="GO" id="GO:0004486">
    <property type="term" value="F:methylenetetrahydrofolate dehydrogenase [NAD(P)+] activity"/>
    <property type="evidence" value="ECO:0000266"/>
    <property type="project" value="RGD"/>
</dbReference>
<dbReference type="GO" id="GO:0009257">
    <property type="term" value="P:10-formyltetrahydrofolate biosynthetic process"/>
    <property type="evidence" value="ECO:0000266"/>
    <property type="project" value="RGD"/>
</dbReference>
<dbReference type="GO" id="GO:0007507">
    <property type="term" value="P:heart development"/>
    <property type="evidence" value="ECO:0000266"/>
    <property type="project" value="RGD"/>
</dbReference>
<dbReference type="GO" id="GO:0000105">
    <property type="term" value="P:L-histidine biosynthetic process"/>
    <property type="evidence" value="ECO:0007669"/>
    <property type="project" value="UniProtKB-KW"/>
</dbReference>
<dbReference type="GO" id="GO:0009086">
    <property type="term" value="P:methionine biosynthetic process"/>
    <property type="evidence" value="ECO:0007669"/>
    <property type="project" value="UniProtKB-KW"/>
</dbReference>
<dbReference type="GO" id="GO:0006555">
    <property type="term" value="P:methionine metabolic process"/>
    <property type="evidence" value="ECO:0000266"/>
    <property type="project" value="RGD"/>
</dbReference>
<dbReference type="GO" id="GO:0001843">
    <property type="term" value="P:neural tube closure"/>
    <property type="evidence" value="ECO:0000266"/>
    <property type="project" value="RGD"/>
</dbReference>
<dbReference type="GO" id="GO:0001780">
    <property type="term" value="P:neutrophil homeostasis"/>
    <property type="evidence" value="ECO:0000266"/>
    <property type="project" value="RGD"/>
</dbReference>
<dbReference type="GO" id="GO:0006730">
    <property type="term" value="P:one-carbon metabolic process"/>
    <property type="evidence" value="ECO:0000270"/>
    <property type="project" value="RGD"/>
</dbReference>
<dbReference type="GO" id="GO:0006164">
    <property type="term" value="P:purine nucleotide biosynthetic process"/>
    <property type="evidence" value="ECO:0000250"/>
    <property type="project" value="UniProtKB"/>
</dbReference>
<dbReference type="GO" id="GO:0009152">
    <property type="term" value="P:purine ribonucleotide biosynthetic process"/>
    <property type="evidence" value="ECO:0000266"/>
    <property type="project" value="RGD"/>
</dbReference>
<dbReference type="GO" id="GO:0035713">
    <property type="term" value="P:response to nitrogen dioxide"/>
    <property type="evidence" value="ECO:0000270"/>
    <property type="project" value="RGD"/>
</dbReference>
<dbReference type="GO" id="GO:0009070">
    <property type="term" value="P:serine family amino acid biosynthetic process"/>
    <property type="evidence" value="ECO:0000266"/>
    <property type="project" value="RGD"/>
</dbReference>
<dbReference type="GO" id="GO:0009069">
    <property type="term" value="P:serine family amino acid metabolic process"/>
    <property type="evidence" value="ECO:0000266"/>
    <property type="project" value="RGD"/>
</dbReference>
<dbReference type="GO" id="GO:0061053">
    <property type="term" value="P:somite development"/>
    <property type="evidence" value="ECO:0000266"/>
    <property type="project" value="RGD"/>
</dbReference>
<dbReference type="GO" id="GO:0035999">
    <property type="term" value="P:tetrahydrofolate interconversion"/>
    <property type="evidence" value="ECO:0000250"/>
    <property type="project" value="UniProtKB"/>
</dbReference>
<dbReference type="GO" id="GO:0046653">
    <property type="term" value="P:tetrahydrofolate metabolic process"/>
    <property type="evidence" value="ECO:0000304"/>
    <property type="project" value="RGD"/>
</dbReference>
<dbReference type="GO" id="GO:0019346">
    <property type="term" value="P:transsulfuration"/>
    <property type="evidence" value="ECO:0000266"/>
    <property type="project" value="RGD"/>
</dbReference>
<dbReference type="CDD" id="cd00477">
    <property type="entry name" value="FTHFS"/>
    <property type="match status" value="1"/>
</dbReference>
<dbReference type="CDD" id="cd01080">
    <property type="entry name" value="NAD_bind_m-THF_DH_Cyclohyd"/>
    <property type="match status" value="1"/>
</dbReference>
<dbReference type="FunFam" id="3.40.50.720:FF:000006">
    <property type="entry name" value="Bifunctional protein FolD"/>
    <property type="match status" value="1"/>
</dbReference>
<dbReference type="FunFam" id="3.30.1510.10:FF:000002">
    <property type="entry name" value="C-1-tetrahydrofolate synthase, cytoplasmic"/>
    <property type="match status" value="1"/>
</dbReference>
<dbReference type="FunFam" id="3.40.50.300:FF:000245">
    <property type="entry name" value="C-1-tetrahydrofolate synthase, cytoplasmic"/>
    <property type="match status" value="1"/>
</dbReference>
<dbReference type="FunFam" id="3.40.50.300:FF:001123">
    <property type="entry name" value="C-1-tetrahydrofolate synthase, cytoplasmic isoform X2"/>
    <property type="match status" value="1"/>
</dbReference>
<dbReference type="FunFam" id="3.40.50.10860:FF:000005">
    <property type="entry name" value="C-1-tetrahydrofolate synthase, cytoplasmic, putative"/>
    <property type="match status" value="1"/>
</dbReference>
<dbReference type="FunFam" id="3.10.410.10:FF:000001">
    <property type="entry name" value="Putative formate--tetrahydrofolate ligase"/>
    <property type="match status" value="1"/>
</dbReference>
<dbReference type="Gene3D" id="3.30.1510.10">
    <property type="entry name" value="Domain 2, N(10)-formyltetrahydrofolate synthetase"/>
    <property type="match status" value="1"/>
</dbReference>
<dbReference type="Gene3D" id="3.10.410.10">
    <property type="entry name" value="Formyltetrahydrofolate synthetase, domain 3"/>
    <property type="match status" value="1"/>
</dbReference>
<dbReference type="Gene3D" id="3.40.50.10860">
    <property type="entry name" value="Leucine Dehydrogenase, chain A, domain 1"/>
    <property type="match status" value="1"/>
</dbReference>
<dbReference type="Gene3D" id="3.40.50.720">
    <property type="entry name" value="NAD(P)-binding Rossmann-like Domain"/>
    <property type="match status" value="1"/>
</dbReference>
<dbReference type="Gene3D" id="3.40.50.300">
    <property type="entry name" value="P-loop containing nucleotide triphosphate hydrolases"/>
    <property type="match status" value="2"/>
</dbReference>
<dbReference type="HAMAP" id="MF_01543">
    <property type="entry name" value="FTHFS"/>
    <property type="match status" value="1"/>
</dbReference>
<dbReference type="HAMAP" id="MF_01576">
    <property type="entry name" value="THF_DHG_CYH"/>
    <property type="match status" value="1"/>
</dbReference>
<dbReference type="InterPro" id="IPR046346">
    <property type="entry name" value="Aminoacid_DH-like_N_sf"/>
</dbReference>
<dbReference type="InterPro" id="IPR000559">
    <property type="entry name" value="Formate_THF_ligase"/>
</dbReference>
<dbReference type="InterPro" id="IPR020628">
    <property type="entry name" value="Formate_THF_ligase_CS"/>
</dbReference>
<dbReference type="InterPro" id="IPR036291">
    <property type="entry name" value="NAD(P)-bd_dom_sf"/>
</dbReference>
<dbReference type="InterPro" id="IPR027417">
    <property type="entry name" value="P-loop_NTPase"/>
</dbReference>
<dbReference type="InterPro" id="IPR000672">
    <property type="entry name" value="THF_DH/CycHdrlase"/>
</dbReference>
<dbReference type="InterPro" id="IPR020630">
    <property type="entry name" value="THF_DH/CycHdrlase_cat_dom"/>
</dbReference>
<dbReference type="InterPro" id="IPR020867">
    <property type="entry name" value="THF_DH/CycHdrlase_CS"/>
</dbReference>
<dbReference type="InterPro" id="IPR020631">
    <property type="entry name" value="THF_DH/CycHdrlase_NAD-bd_dom"/>
</dbReference>
<dbReference type="PANTHER" id="PTHR48099:SF1">
    <property type="entry name" value="C-1-TETRAHYDROFOLATE SYNTHASE, CYTOPLASMIC"/>
    <property type="match status" value="1"/>
</dbReference>
<dbReference type="PANTHER" id="PTHR48099">
    <property type="entry name" value="C-1-TETRAHYDROFOLATE SYNTHASE, CYTOPLASMIC-RELATED"/>
    <property type="match status" value="1"/>
</dbReference>
<dbReference type="Pfam" id="PF01268">
    <property type="entry name" value="FTHFS"/>
    <property type="match status" value="1"/>
</dbReference>
<dbReference type="Pfam" id="PF00763">
    <property type="entry name" value="THF_DHG_CYH"/>
    <property type="match status" value="1"/>
</dbReference>
<dbReference type="Pfam" id="PF02882">
    <property type="entry name" value="THF_DHG_CYH_C"/>
    <property type="match status" value="1"/>
</dbReference>
<dbReference type="PRINTS" id="PR00085">
    <property type="entry name" value="THFDHDRGNASE"/>
</dbReference>
<dbReference type="SUPFAM" id="SSF53223">
    <property type="entry name" value="Aminoacid dehydrogenase-like, N-terminal domain"/>
    <property type="match status" value="1"/>
</dbReference>
<dbReference type="SUPFAM" id="SSF51735">
    <property type="entry name" value="NAD(P)-binding Rossmann-fold domains"/>
    <property type="match status" value="1"/>
</dbReference>
<dbReference type="SUPFAM" id="SSF52540">
    <property type="entry name" value="P-loop containing nucleoside triphosphate hydrolases"/>
    <property type="match status" value="1"/>
</dbReference>
<dbReference type="PROSITE" id="PS00721">
    <property type="entry name" value="FTHFS_1"/>
    <property type="match status" value="1"/>
</dbReference>
<dbReference type="PROSITE" id="PS00722">
    <property type="entry name" value="FTHFS_2"/>
    <property type="match status" value="1"/>
</dbReference>
<dbReference type="PROSITE" id="PS00766">
    <property type="entry name" value="THF_DHG_CYH_1"/>
    <property type="match status" value="1"/>
</dbReference>
<dbReference type="PROSITE" id="PS00767">
    <property type="entry name" value="THF_DHG_CYH_2"/>
    <property type="match status" value="1"/>
</dbReference>